<proteinExistence type="evidence at protein level"/>
<comment type="function">
    <text evidence="3 4 5 8">Functions as a component of the DNA-binding general transcription factor complex TFIID. Binding of TFIID to a promoter (with or without TATA element) is the initial step in pre-initiation complex (PIC) formation. TFIID plays a key role in the regulation of gene expression by RNA polymerase II through different activities such as transcription activator interaction, core promoter recognition and selectivity, TFIIA and TFIIB interaction, chromatin modification (histone acetylation by TAF1), facilitation of DNA opening and initiation of transcription.</text>
</comment>
<comment type="catalytic activity">
    <reaction>
        <text>L-lysyl-[protein] + acetyl-CoA = N(6)-acetyl-L-lysyl-[protein] + CoA + H(+)</text>
        <dbReference type="Rhea" id="RHEA:45948"/>
        <dbReference type="Rhea" id="RHEA-COMP:9752"/>
        <dbReference type="Rhea" id="RHEA-COMP:10731"/>
        <dbReference type="ChEBI" id="CHEBI:15378"/>
        <dbReference type="ChEBI" id="CHEBI:29969"/>
        <dbReference type="ChEBI" id="CHEBI:57287"/>
        <dbReference type="ChEBI" id="CHEBI:57288"/>
        <dbReference type="ChEBI" id="CHEBI:61930"/>
        <dbReference type="EC" id="2.3.1.48"/>
    </reaction>
</comment>
<comment type="subunit">
    <text evidence="3">The 1.2 MDa TFIID complex is composed of TATA binding protein (TBP) and the 14 TBP-associated factors. One copy of each TAF1, TAF2, TAF3, TAF7, TAF8, TAF11, TAF13, two copies of each TAF4, TAF5, TAF6, TAF9, TAF10, TAF12, and three copies of TAF14.</text>
</comment>
<comment type="interaction">
    <interactant intactId="EBI-18855">
        <id>P46677</id>
    </interactant>
    <interactant intactId="EBI-3493">
        <id>P35817</id>
        <label>BDF1</label>
    </interactant>
    <organismsDiffer>false</organismsDiffer>
    <experiments>3</experiments>
</comment>
<comment type="interaction">
    <interactant intactId="EBI-18855">
        <id>P46677</id>
    </interactant>
    <interactant intactId="EBI-18862">
        <id>P23255</id>
        <label>TAF2</label>
    </interactant>
    <organismsDiffer>false</organismsDiffer>
    <experiments>5</experiments>
</comment>
<comment type="interaction">
    <interactant intactId="EBI-18855">
        <id>P46677</id>
    </interactant>
    <interactant intactId="EBI-11231">
        <id>P50105</id>
        <label>TAF4</label>
    </interactant>
    <organismsDiffer>false</organismsDiffer>
    <experiments>7</experiments>
</comment>
<comment type="interaction">
    <interactant intactId="EBI-18855">
        <id>P46677</id>
    </interactant>
    <interactant intactId="EBI-18876">
        <id>P53040</id>
        <label>TAF6</label>
    </interactant>
    <organismsDiffer>false</organismsDiffer>
    <experiments>7</experiments>
</comment>
<comment type="interaction">
    <interactant intactId="EBI-18855">
        <id>P46677</id>
    </interactant>
    <interactant intactId="EBI-27490">
        <id>Q05021</id>
        <label>TAF7</label>
    </interactant>
    <organismsDiffer>false</organismsDiffer>
    <experiments>3</experiments>
</comment>
<comment type="subcellular location">
    <subcellularLocation>
        <location evidence="6">Nucleus</location>
    </subcellularLocation>
</comment>
<comment type="domain">
    <text>Compared to higher eukaryotes TAF1, yeast TAF1 lacks the C-terminal bromodomains and C-terminal kinase activity. The TFIID interacting proteins BDF1 and BDF2 may substitute for these domains.</text>
</comment>
<comment type="miscellaneous">
    <text evidence="7">Present with 1500 molecules/cell in log phase SD medium.</text>
</comment>
<comment type="similarity">
    <text evidence="9">Belongs to the TAF1 family.</text>
</comment>
<dbReference type="EC" id="2.3.1.48"/>
<dbReference type="EMBL" id="U14954">
    <property type="protein sequence ID" value="AAA79178.1"/>
    <property type="molecule type" value="Genomic_DNA"/>
</dbReference>
<dbReference type="EMBL" id="X84098">
    <property type="protein sequence ID" value="CAA58896.1"/>
    <property type="molecule type" value="Genomic_DNA"/>
</dbReference>
<dbReference type="EMBL" id="Z73059">
    <property type="protein sequence ID" value="CAA97304.1"/>
    <property type="molecule type" value="Genomic_DNA"/>
</dbReference>
<dbReference type="EMBL" id="BK006941">
    <property type="protein sequence ID" value="DAA08362.1"/>
    <property type="molecule type" value="Genomic_DNA"/>
</dbReference>
<dbReference type="PIR" id="S50237">
    <property type="entry name" value="S50237"/>
</dbReference>
<dbReference type="RefSeq" id="NP_011790.1">
    <property type="nucleotide sequence ID" value="NM_001181403.2"/>
</dbReference>
<dbReference type="PDB" id="4B0A">
    <property type="method" value="X-ray"/>
    <property type="resolution" value="1.97 A"/>
    <property type="chains" value="A=8-71"/>
</dbReference>
<dbReference type="PDB" id="4OY2">
    <property type="method" value="X-ray"/>
    <property type="resolution" value="2.90 A"/>
    <property type="chains" value="A/C/E=455-960"/>
</dbReference>
<dbReference type="PDB" id="6E16">
    <property type="method" value="X-ray"/>
    <property type="resolution" value="2.40 A"/>
    <property type="chains" value="A=9-40"/>
</dbReference>
<dbReference type="PDB" id="6E24">
    <property type="method" value="X-ray"/>
    <property type="resolution" value="3.00 A"/>
    <property type="chains" value="A=9-40"/>
</dbReference>
<dbReference type="PDBsum" id="4B0A"/>
<dbReference type="PDBsum" id="4OY2"/>
<dbReference type="PDBsum" id="6E16"/>
<dbReference type="PDBsum" id="6E24"/>
<dbReference type="SMR" id="P46677"/>
<dbReference type="BioGRID" id="33524">
    <property type="interactions" value="966"/>
</dbReference>
<dbReference type="ComplexPortal" id="CPX-1642">
    <property type="entry name" value="General transcription factor complex TFIID"/>
</dbReference>
<dbReference type="DIP" id="DIP-839N"/>
<dbReference type="FunCoup" id="P46677">
    <property type="interactions" value="532"/>
</dbReference>
<dbReference type="IntAct" id="P46677">
    <property type="interactions" value="77"/>
</dbReference>
<dbReference type="MINT" id="P46677"/>
<dbReference type="STRING" id="4932.YGR274C"/>
<dbReference type="GlyGen" id="P46677">
    <property type="glycosylation" value="4 sites, 1 O-linked glycan (3 sites)"/>
</dbReference>
<dbReference type="iPTMnet" id="P46677"/>
<dbReference type="PaxDb" id="4932-YGR274C"/>
<dbReference type="PeptideAtlas" id="P46677"/>
<dbReference type="EnsemblFungi" id="YGR274C_mRNA">
    <property type="protein sequence ID" value="YGR274C"/>
    <property type="gene ID" value="YGR274C"/>
</dbReference>
<dbReference type="GeneID" id="853191"/>
<dbReference type="KEGG" id="sce:YGR274C"/>
<dbReference type="AGR" id="SGD:S000003506"/>
<dbReference type="SGD" id="S000003506">
    <property type="gene designation" value="TAF1"/>
</dbReference>
<dbReference type="VEuPathDB" id="FungiDB:YGR274C"/>
<dbReference type="eggNOG" id="KOG0008">
    <property type="taxonomic scope" value="Eukaryota"/>
</dbReference>
<dbReference type="GeneTree" id="ENSGT00940000155242"/>
<dbReference type="HOGENOM" id="CLU_000572_1_0_1"/>
<dbReference type="InParanoid" id="P46677"/>
<dbReference type="OMA" id="KEFMKYQ"/>
<dbReference type="OrthoDB" id="5752at2759"/>
<dbReference type="BioCyc" id="YEAST:G3O-30939-MONOMER"/>
<dbReference type="BRENDA" id="2.3.1.48">
    <property type="organism ID" value="984"/>
</dbReference>
<dbReference type="Reactome" id="R-SCE-674695">
    <property type="pathway name" value="RNA Polymerase II Pre-transcription Events"/>
</dbReference>
<dbReference type="Reactome" id="R-SCE-73776">
    <property type="pathway name" value="RNA Polymerase II Promoter Escape"/>
</dbReference>
<dbReference type="Reactome" id="R-SCE-73779">
    <property type="pathway name" value="RNA Polymerase II Transcription Pre-Initiation And Promoter Opening"/>
</dbReference>
<dbReference type="Reactome" id="R-SCE-75953">
    <property type="pathway name" value="RNA Polymerase II Transcription Initiation"/>
</dbReference>
<dbReference type="Reactome" id="R-SCE-76042">
    <property type="pathway name" value="RNA Polymerase II Transcription Initiation And Promoter Clearance"/>
</dbReference>
<dbReference type="BioGRID-ORCS" id="853191">
    <property type="hits" value="8 hits in 10 CRISPR screens"/>
</dbReference>
<dbReference type="EvolutionaryTrace" id="P46677"/>
<dbReference type="PRO" id="PR:P46677"/>
<dbReference type="Proteomes" id="UP000002311">
    <property type="component" value="Chromosome VII"/>
</dbReference>
<dbReference type="RNAct" id="P46677">
    <property type="molecule type" value="protein"/>
</dbReference>
<dbReference type="GO" id="GO:0005829">
    <property type="term" value="C:cytosol"/>
    <property type="evidence" value="ECO:0000314"/>
    <property type="project" value="SGD"/>
</dbReference>
<dbReference type="GO" id="GO:0005634">
    <property type="term" value="C:nucleus"/>
    <property type="evidence" value="ECO:0000314"/>
    <property type="project" value="SGD"/>
</dbReference>
<dbReference type="GO" id="GO:0005669">
    <property type="term" value="C:transcription factor TFIID complex"/>
    <property type="evidence" value="ECO:0000314"/>
    <property type="project" value="SGD"/>
</dbReference>
<dbReference type="GO" id="GO:0003682">
    <property type="term" value="F:chromatin binding"/>
    <property type="evidence" value="ECO:0000314"/>
    <property type="project" value="SGD"/>
</dbReference>
<dbReference type="GO" id="GO:0004402">
    <property type="term" value="F:histone acetyltransferase activity"/>
    <property type="evidence" value="ECO:0000314"/>
    <property type="project" value="SGD"/>
</dbReference>
<dbReference type="GO" id="GO:0060090">
    <property type="term" value="F:molecular adaptor activity"/>
    <property type="evidence" value="ECO:0000314"/>
    <property type="project" value="SGD"/>
</dbReference>
<dbReference type="GO" id="GO:0046982">
    <property type="term" value="F:protein heterodimerization activity"/>
    <property type="evidence" value="ECO:0000353"/>
    <property type="project" value="ParkinsonsUK-UCL"/>
</dbReference>
<dbReference type="GO" id="GO:0016251">
    <property type="term" value="F:RNA polymerase II general transcription initiation factor activity"/>
    <property type="evidence" value="ECO:0000318"/>
    <property type="project" value="GO_Central"/>
</dbReference>
<dbReference type="GO" id="GO:0017025">
    <property type="term" value="F:TBP-class protein binding"/>
    <property type="evidence" value="ECO:0000314"/>
    <property type="project" value="SGD"/>
</dbReference>
<dbReference type="GO" id="GO:0045944">
    <property type="term" value="P:positive regulation of transcription by RNA polymerase II"/>
    <property type="evidence" value="ECO:0000314"/>
    <property type="project" value="ComplexPortal"/>
</dbReference>
<dbReference type="GO" id="GO:0051123">
    <property type="term" value="P:RNA polymerase II preinitiation complex assembly"/>
    <property type="evidence" value="ECO:0000315"/>
    <property type="project" value="SGD"/>
</dbReference>
<dbReference type="GO" id="GO:0006366">
    <property type="term" value="P:transcription by RNA polymerase II"/>
    <property type="evidence" value="ECO:0000314"/>
    <property type="project" value="SGD"/>
</dbReference>
<dbReference type="InterPro" id="IPR040240">
    <property type="entry name" value="TAF1"/>
</dbReference>
<dbReference type="InterPro" id="IPR022591">
    <property type="entry name" value="TAF1_HAT_dom"/>
</dbReference>
<dbReference type="InterPro" id="IPR041670">
    <property type="entry name" value="Znf-CCHC_6"/>
</dbReference>
<dbReference type="PANTHER" id="PTHR13900">
    <property type="entry name" value="TRANSCRIPTION INITIATION FACTOR TFIID"/>
    <property type="match status" value="1"/>
</dbReference>
<dbReference type="PANTHER" id="PTHR13900:SF0">
    <property type="entry name" value="TRANSCRIPTION INITIATION FACTOR TFIID SUBUNIT 1"/>
    <property type="match status" value="1"/>
</dbReference>
<dbReference type="Pfam" id="PF12157">
    <property type="entry name" value="DUF3591"/>
    <property type="match status" value="1"/>
</dbReference>
<dbReference type="Pfam" id="PF15288">
    <property type="entry name" value="zf-CCHC_6"/>
    <property type="match status" value="1"/>
</dbReference>
<evidence type="ECO:0000255" key="1"/>
<evidence type="ECO:0000256" key="2">
    <source>
        <dbReference type="SAM" id="MobiDB-lite"/>
    </source>
</evidence>
<evidence type="ECO:0000269" key="3">
    <source>
    </source>
</evidence>
<evidence type="ECO:0000269" key="4">
    <source>
    </source>
</evidence>
<evidence type="ECO:0000269" key="5">
    <source>
    </source>
</evidence>
<evidence type="ECO:0000269" key="6">
    <source>
    </source>
</evidence>
<evidence type="ECO:0000269" key="7">
    <source>
    </source>
</evidence>
<evidence type="ECO:0000269" key="8">
    <source>
    </source>
</evidence>
<evidence type="ECO:0000305" key="9"/>
<evidence type="ECO:0007829" key="10">
    <source>
        <dbReference type="PDB" id="4B0A"/>
    </source>
</evidence>
<evidence type="ECO:0007829" key="11">
    <source>
        <dbReference type="PDB" id="4OY2"/>
    </source>
</evidence>
<evidence type="ECO:0007829" key="12">
    <source>
        <dbReference type="PDB" id="6E24"/>
    </source>
</evidence>
<organism>
    <name type="scientific">Saccharomyces cerevisiae (strain ATCC 204508 / S288c)</name>
    <name type="common">Baker's yeast</name>
    <dbReference type="NCBI Taxonomy" id="559292"/>
    <lineage>
        <taxon>Eukaryota</taxon>
        <taxon>Fungi</taxon>
        <taxon>Dikarya</taxon>
        <taxon>Ascomycota</taxon>
        <taxon>Saccharomycotina</taxon>
        <taxon>Saccharomycetes</taxon>
        <taxon>Saccharomycetales</taxon>
        <taxon>Saccharomycetaceae</taxon>
        <taxon>Saccharomyces</taxon>
    </lineage>
</organism>
<protein>
    <recommendedName>
        <fullName>Transcription initiation factor TFIID subunit 1</fullName>
        <ecNumber>2.3.1.48</ecNumber>
    </recommendedName>
    <alternativeName>
        <fullName>TAFII-130</fullName>
    </alternativeName>
    <alternativeName>
        <fullName>TAFII-145</fullName>
    </alternativeName>
    <alternativeName>
        <fullName>TBP-associated factor 1</fullName>
    </alternativeName>
    <alternativeName>
        <fullName>TBP-associated factor 145 kDa</fullName>
    </alternativeName>
</protein>
<gene>
    <name type="primary">TAF1</name>
    <name type="synonym">TAF130</name>
    <name type="synonym">TAF145</name>
    <name type="ordered locus">YGR274C</name>
    <name type="ORF">G9374</name>
</gene>
<accession>P46677</accession>
<accession>D6VV51</accession>
<reference key="1">
    <citation type="journal article" date="1994" name="Nature">
        <title>Yeast TAFIIS in a multisubunit complex required for activated transcription.</title>
        <authorList>
            <person name="Reese J.C."/>
            <person name="Apone L."/>
            <person name="Walker S.S."/>
            <person name="Griffin L.A."/>
            <person name="Green M.R."/>
        </authorList>
    </citation>
    <scope>NUCLEOTIDE SEQUENCE [GENOMIC DNA]</scope>
    <scope>PROTEIN SEQUENCE OF 583-599 AND 651-671</scope>
    <source>
        <strain>Y57</strain>
    </source>
</reference>
<reference key="2">
    <citation type="journal article" date="1997" name="Yeast">
        <title>The sequence of a 8 kb segment on the right arm of yeast chromosome VII identifies four new open reading frames and the genes for yTAFII145.</title>
        <authorList>
            <person name="Ruzzi M."/>
            <person name="Marconi A."/>
            <person name="Saliola M."/>
            <person name="Fabiani L."/>
            <person name="Montebove F."/>
            <person name="Frontali L."/>
        </authorList>
    </citation>
    <scope>NUCLEOTIDE SEQUENCE [GENOMIC DNA]</scope>
    <source>
        <strain>ATCC 204508 / S288c</strain>
    </source>
</reference>
<reference key="3">
    <citation type="journal article" date="1997" name="Nature">
        <title>The nucleotide sequence of Saccharomyces cerevisiae chromosome VII.</title>
        <authorList>
            <person name="Tettelin H."/>
            <person name="Agostoni-Carbone M.L."/>
            <person name="Albermann K."/>
            <person name="Albers M."/>
            <person name="Arroyo J."/>
            <person name="Backes U."/>
            <person name="Barreiros T."/>
            <person name="Bertani I."/>
            <person name="Bjourson A.J."/>
            <person name="Brueckner M."/>
            <person name="Bruschi C.V."/>
            <person name="Carignani G."/>
            <person name="Castagnoli L."/>
            <person name="Cerdan E."/>
            <person name="Clemente M.L."/>
            <person name="Coblenz A."/>
            <person name="Coglievina M."/>
            <person name="Coissac E."/>
            <person name="Defoor E."/>
            <person name="Del Bino S."/>
            <person name="Delius H."/>
            <person name="Delneri D."/>
            <person name="de Wergifosse P."/>
            <person name="Dujon B."/>
            <person name="Durand P."/>
            <person name="Entian K.-D."/>
            <person name="Eraso P."/>
            <person name="Escribano V."/>
            <person name="Fabiani L."/>
            <person name="Fartmann B."/>
            <person name="Feroli F."/>
            <person name="Feuermann M."/>
            <person name="Frontali L."/>
            <person name="Garcia-Gonzalez M."/>
            <person name="Garcia-Saez M.I."/>
            <person name="Goffeau A."/>
            <person name="Guerreiro P."/>
            <person name="Hani J."/>
            <person name="Hansen M."/>
            <person name="Hebling U."/>
            <person name="Hernandez K."/>
            <person name="Heumann K."/>
            <person name="Hilger F."/>
            <person name="Hofmann B."/>
            <person name="Indge K.J."/>
            <person name="James C.M."/>
            <person name="Klima R."/>
            <person name="Koetter P."/>
            <person name="Kramer B."/>
            <person name="Kramer W."/>
            <person name="Lauquin G."/>
            <person name="Leuther H."/>
            <person name="Louis E.J."/>
            <person name="Maillier E."/>
            <person name="Marconi A."/>
            <person name="Martegani E."/>
            <person name="Mazon M.J."/>
            <person name="Mazzoni C."/>
            <person name="McReynolds A.D.K."/>
            <person name="Melchioretto P."/>
            <person name="Mewes H.-W."/>
            <person name="Minenkova O."/>
            <person name="Mueller-Auer S."/>
            <person name="Nawrocki A."/>
            <person name="Netter P."/>
            <person name="Neu R."/>
            <person name="Nombela C."/>
            <person name="Oliver S.G."/>
            <person name="Panzeri L."/>
            <person name="Paoluzi S."/>
            <person name="Plevani P."/>
            <person name="Portetelle D."/>
            <person name="Portillo F."/>
            <person name="Potier S."/>
            <person name="Purnelle B."/>
            <person name="Rieger M."/>
            <person name="Riles L."/>
            <person name="Rinaldi T."/>
            <person name="Robben J."/>
            <person name="Rodrigues-Pousada C."/>
            <person name="Rodriguez-Belmonte E."/>
            <person name="Rodriguez-Torres A.M."/>
            <person name="Rose M."/>
            <person name="Ruzzi M."/>
            <person name="Saliola M."/>
            <person name="Sanchez-Perez M."/>
            <person name="Schaefer B."/>
            <person name="Schaefer M."/>
            <person name="Scharfe M."/>
            <person name="Schmidheini T."/>
            <person name="Schreer A."/>
            <person name="Skala J."/>
            <person name="Souciet J.-L."/>
            <person name="Steensma H.Y."/>
            <person name="Talla E."/>
            <person name="Thierry A."/>
            <person name="Vandenbol M."/>
            <person name="van der Aart Q.J.M."/>
            <person name="Van Dyck L."/>
            <person name="Vanoni M."/>
            <person name="Verhasselt P."/>
            <person name="Voet M."/>
            <person name="Volckaert G."/>
            <person name="Wambutt R."/>
            <person name="Watson M.D."/>
            <person name="Weber N."/>
            <person name="Wedler E."/>
            <person name="Wedler H."/>
            <person name="Wipfli P."/>
            <person name="Wolf K."/>
            <person name="Wright L.F."/>
            <person name="Zaccaria P."/>
            <person name="Zimmermann M."/>
            <person name="Zollner A."/>
            <person name="Kleine K."/>
        </authorList>
    </citation>
    <scope>NUCLEOTIDE SEQUENCE [LARGE SCALE GENOMIC DNA]</scope>
    <source>
        <strain>ATCC 204508 / S288c</strain>
    </source>
</reference>
<reference key="4">
    <citation type="journal article" date="2014" name="G3 (Bethesda)">
        <title>The reference genome sequence of Saccharomyces cerevisiae: Then and now.</title>
        <authorList>
            <person name="Engel S.R."/>
            <person name="Dietrich F.S."/>
            <person name="Fisk D.G."/>
            <person name="Binkley G."/>
            <person name="Balakrishnan R."/>
            <person name="Costanzo M.C."/>
            <person name="Dwight S.S."/>
            <person name="Hitz B.C."/>
            <person name="Karra K."/>
            <person name="Nash R.S."/>
            <person name="Weng S."/>
            <person name="Wong E.D."/>
            <person name="Lloyd P."/>
            <person name="Skrzypek M.S."/>
            <person name="Miyasato S.R."/>
            <person name="Simison M."/>
            <person name="Cherry J.M."/>
        </authorList>
    </citation>
    <scope>GENOME REANNOTATION</scope>
    <source>
        <strain>ATCC 204508 / S288c</strain>
    </source>
</reference>
<reference key="5">
    <citation type="journal article" date="1995" name="Proc. Natl. Acad. Sci. U.S.A.">
        <title>Identification and characterization of a TFIID-like multiprotein complex from Saccharomyces cerevisiae.</title>
        <authorList>
            <person name="Poon D."/>
            <person name="Bai Y."/>
            <person name="Campbell A.M."/>
            <person name="Bjorklund S."/>
            <person name="Kim Y.-J."/>
            <person name="Zhou S."/>
            <person name="Kornberg R.D."/>
            <person name="Weil P.A."/>
        </authorList>
    </citation>
    <scope>PROTEIN SEQUENCE OF 368-384; 528-554 AND 752-783</scope>
    <scope>CHARACTERIZATION</scope>
    <source>
        <strain>ATCC 76621 / YPH252</strain>
    </source>
</reference>
<reference key="6">
    <citation type="journal article" date="1996" name="Cell">
        <title>The TAF(II)250 subunit of TFIID has histone acetyltransferase activity.</title>
        <authorList>
            <person name="Mizzen C.A."/>
            <person name="Yang X.J."/>
            <person name="Kokubo T."/>
            <person name="Brownell J.E."/>
            <person name="Bannister A.J."/>
            <person name="Owen-Hughes T."/>
            <person name="Workman J."/>
            <person name="Wang L."/>
            <person name="Berger S.L."/>
            <person name="Kouzarides T."/>
            <person name="Nakatani Y."/>
            <person name="Allis C.D."/>
        </authorList>
    </citation>
    <scope>FUNCTION</scope>
    <scope>TAF1 ACETYLATION ACTIVITY</scope>
</reference>
<reference key="7">
    <citation type="journal article" date="2000" name="J. Biol. Chem.">
        <title>Identification of two novel TAF subunits of the yeast Saccharomyces cerevisiae TFIID complex.</title>
        <authorList>
            <person name="Sanders S.L."/>
            <person name="Weil P.A."/>
        </authorList>
    </citation>
    <scope>FUNCTION</scope>
    <scope>SUBUNIT</scope>
</reference>
<reference key="8">
    <citation type="journal article" date="2002" name="Mol. Cell. Biol.">
        <title>Molecular characterization of Saccharomyces cerevisiae TFIID.</title>
        <authorList>
            <person name="Sanders S.L."/>
            <person name="Garbett K.A."/>
            <person name="Weil P.A."/>
        </authorList>
    </citation>
    <scope>FUNCTION</scope>
    <scope>TFIID STOICHIOMETRY</scope>
</reference>
<reference key="9">
    <citation type="journal article" date="2002" name="Plant Mol. Biol.">
        <title>Multi-protein complexes in eukaryotic gene transcription.</title>
        <authorList>
            <person name="Martinez E."/>
        </authorList>
    </citation>
    <scope>FUNCTION</scope>
</reference>
<reference key="10">
    <citation type="journal article" date="2003" name="Nature">
        <title>Global analysis of protein localization in budding yeast.</title>
        <authorList>
            <person name="Huh W.-K."/>
            <person name="Falvo J.V."/>
            <person name="Gerke L.C."/>
            <person name="Carroll A.S."/>
            <person name="Howson R.W."/>
            <person name="Weissman J.S."/>
            <person name="O'Shea E.K."/>
        </authorList>
    </citation>
    <scope>SUBCELLULAR LOCATION [LARGE SCALE ANALYSIS]</scope>
</reference>
<reference key="11">
    <citation type="journal article" date="2003" name="Nature">
        <title>Global analysis of protein expression in yeast.</title>
        <authorList>
            <person name="Ghaemmaghami S."/>
            <person name="Huh W.-K."/>
            <person name="Bower K."/>
            <person name="Howson R.W."/>
            <person name="Belle A."/>
            <person name="Dephoure N."/>
            <person name="O'Shea E.K."/>
            <person name="Weissman J.S."/>
        </authorList>
    </citation>
    <scope>LEVEL OF PROTEIN EXPRESSION [LARGE SCALE ANALYSIS]</scope>
</reference>
<reference key="12">
    <citation type="journal article" date="2002" name="EMBO J.">
        <title>Mapping histone fold TAFs within yeast TFIID.</title>
        <authorList>
            <person name="Leurent C."/>
            <person name="Sanders S.L."/>
            <person name="Ruhlmann C."/>
            <person name="Mallouh V."/>
            <person name="Weil P.A."/>
            <person name="Kirschner D.B."/>
            <person name="Tora L."/>
            <person name="Schultz P."/>
        </authorList>
    </citation>
    <scope>3D-STRUCTURE</scope>
    <scope>ELECTRON MICROSCOPY OF TFIID</scope>
</reference>
<name>TAF1_YEAST</name>
<sequence>MVKQQGSGKTNLANEDEAYEAIFGGEFGSLEIGSYIGGDEGANSKDYTEHLPDAVDFEDEDELADDDDDLPEESDANLHPAMMTMGAYDDVNENGAVLGIDSNSLNMQLPEINGDLSQQFILEDDGGTPATSNALFMGMDANEIHLATETGVLDGSGANEIGHSQLSIGGVNGNDMSINGGFIMEPDMSDGKHKKATKLDLINHEKYLLKKYFPDFEKGKILKWNKLIYRRSVPYHWHSEISRVKKPFMPLNLKFKVQQDDKRLFNSRTISYVAPIYQGKNNLLQSNSSASRRGLIHVSIDELFPIKEQQKKRKIIHDEKTISEDLLIATDDWDQEKIINQGTSSTATLADSSMTPNLKFSGGYKLKSLIEDVAEDWQWDEDMIIDAKLKESKHAELNMNDEKLLLMIEKTNNLAQQKQQLDSSNLILPLNETILQQKFNLSNDDKYQILKKTHQTKVRSTISNLNIQHSQPAINLQSPFYKVAVPRYQLRHFHRENFGSHIRPGTKIVFSKLKARKRKRDKGKDVKESFSTSQDLTIGDTAPVYLMEYSEQTPVALSKFGMANKLINYYRKANEQDTLRPKLPVGETHVLGVQDKSPFWNFGFVEPGHIVPTLYNNMIRAPVFKHDISGTDFLLTKSSGFGISNRFYLRNINHLFTVGQTFPVEEIPGPNSRKVTSMKATRLKMIIYRILNHNHSKAISIDPIAKHFPDQDYGQNRQKVKEFMKYQRDGPEKGLWRLKDDEKLLDNEAVKSLITPEQISQVESMSQGLQFQEDNEAYNFDSKLKSLEENLLPWNITKNFINSTQMRAMIQIHGVGDPTGCGEGFSFLKTSMKGGFVKSGSPSSNNNSSNKKGTNTHSYNVAQQQKAYDEEIAKTWYTHTKSLSISNPFEEMTNPDEINQTNKHVKTDRDDKKILKIVRKKRDENGIIQRQTIFIRDPRVIQGYIKIKEQDKEDVNKLLEEDTSKINNLEELEKQKKLLQLELANLEKSQQRRAARQNSKRNGGATRTENSVDNGSDLAGVTDGKAARNKGKNTTRRCATCGQIGHIRTNKSCPMYSSKDNPASPK</sequence>
<keyword id="KW-0002">3D-structure</keyword>
<keyword id="KW-0012">Acyltransferase</keyword>
<keyword id="KW-0156">Chromatin regulator</keyword>
<keyword id="KW-0175">Coiled coil</keyword>
<keyword id="KW-0903">Direct protein sequencing</keyword>
<keyword id="KW-0539">Nucleus</keyword>
<keyword id="KW-1185">Reference proteome</keyword>
<keyword id="KW-0804">Transcription</keyword>
<keyword id="KW-0805">Transcription regulation</keyword>
<keyword id="KW-0808">Transferase</keyword>
<feature type="chain" id="PRO_0000118862" description="Transcription initiation factor TFIID subunit 1">
    <location>
        <begin position="1"/>
        <end position="1066"/>
    </location>
</feature>
<feature type="region of interest" description="Disordered" evidence="2">
    <location>
        <begin position="836"/>
        <end position="856"/>
    </location>
</feature>
<feature type="region of interest" description="Disordered" evidence="2">
    <location>
        <begin position="989"/>
        <end position="1036"/>
    </location>
</feature>
<feature type="coiled-coil region" evidence="1">
    <location>
        <begin position="409"/>
        <end position="425"/>
    </location>
</feature>
<feature type="coiled-coil region" evidence="1">
    <location>
        <begin position="944"/>
        <end position="1000"/>
    </location>
</feature>
<feature type="compositionally biased region" description="Low complexity" evidence="2">
    <location>
        <begin position="839"/>
        <end position="856"/>
    </location>
</feature>
<feature type="compositionally biased region" description="Polar residues" evidence="2">
    <location>
        <begin position="1000"/>
        <end position="1014"/>
    </location>
</feature>
<feature type="strand" evidence="12">
    <location>
        <begin position="12"/>
        <end position="14"/>
    </location>
</feature>
<feature type="helix" evidence="10">
    <location>
        <begin position="15"/>
        <end position="23"/>
    </location>
</feature>
<feature type="strand" evidence="10">
    <location>
        <begin position="25"/>
        <end position="27"/>
    </location>
</feature>
<feature type="helix" evidence="10">
    <location>
        <begin position="28"/>
        <end position="35"/>
    </location>
</feature>
<feature type="helix" evidence="11">
    <location>
        <begin position="471"/>
        <end position="475"/>
    </location>
</feature>
<feature type="turn" evidence="11">
    <location>
        <begin position="478"/>
        <end position="480"/>
    </location>
</feature>
<feature type="strand" evidence="11">
    <location>
        <begin position="481"/>
        <end position="484"/>
    </location>
</feature>
<feature type="helix" evidence="11">
    <location>
        <begin position="488"/>
        <end position="491"/>
    </location>
</feature>
<feature type="turn" evidence="11">
    <location>
        <begin position="492"/>
        <end position="494"/>
    </location>
</feature>
<feature type="turn" evidence="11">
    <location>
        <begin position="498"/>
        <end position="501"/>
    </location>
</feature>
<feature type="strand" evidence="11">
    <location>
        <begin position="507"/>
        <end position="510"/>
    </location>
</feature>
<feature type="helix" evidence="11">
    <location>
        <begin position="518"/>
        <end position="521"/>
    </location>
</feature>
<feature type="helix" evidence="11">
    <location>
        <begin position="526"/>
        <end position="529"/>
    </location>
</feature>
<feature type="helix" evidence="11">
    <location>
        <begin position="533"/>
        <end position="536"/>
    </location>
</feature>
<feature type="strand" evidence="11">
    <location>
        <begin position="538"/>
        <end position="542"/>
    </location>
</feature>
<feature type="strand" evidence="11">
    <location>
        <begin position="544"/>
        <end position="553"/>
    </location>
</feature>
<feature type="strand" evidence="11">
    <location>
        <begin position="563"/>
        <end position="571"/>
    </location>
</feature>
<feature type="strand" evidence="11">
    <location>
        <begin position="584"/>
        <end position="591"/>
    </location>
</feature>
<feature type="turn" evidence="11">
    <location>
        <begin position="598"/>
        <end position="601"/>
    </location>
</feature>
<feature type="strand" evidence="11">
    <location>
        <begin position="610"/>
        <end position="615"/>
    </location>
</feature>
<feature type="strand" evidence="11">
    <location>
        <begin position="617"/>
        <end position="626"/>
    </location>
</feature>
<feature type="strand" evidence="11">
    <location>
        <begin position="632"/>
        <end position="640"/>
    </location>
</feature>
<feature type="strand" evidence="11">
    <location>
        <begin position="643"/>
        <end position="650"/>
    </location>
</feature>
<feature type="strand" evidence="11">
    <location>
        <begin position="653"/>
        <end position="658"/>
    </location>
</feature>
<feature type="strand" evidence="11">
    <location>
        <begin position="662"/>
        <end position="665"/>
    </location>
</feature>
<feature type="helix" evidence="11">
    <location>
        <begin position="673"/>
        <end position="694"/>
    </location>
</feature>
<feature type="helix" evidence="11">
    <location>
        <begin position="702"/>
        <end position="705"/>
    </location>
</feature>
<feature type="helix" evidence="11">
    <location>
        <begin position="713"/>
        <end position="720"/>
    </location>
</feature>
<feature type="turn" evidence="11">
    <location>
        <begin position="721"/>
        <end position="723"/>
    </location>
</feature>
<feature type="strand" evidence="11">
    <location>
        <begin position="724"/>
        <end position="726"/>
    </location>
</feature>
<feature type="turn" evidence="11">
    <location>
        <begin position="731"/>
        <end position="734"/>
    </location>
</feature>
<feature type="strand" evidence="11">
    <location>
        <begin position="735"/>
        <end position="738"/>
    </location>
</feature>
<feature type="helix" evidence="11">
    <location>
        <begin position="747"/>
        <end position="750"/>
    </location>
</feature>
<feature type="helix" evidence="11">
    <location>
        <begin position="751"/>
        <end position="753"/>
    </location>
</feature>
<feature type="helix" evidence="11">
    <location>
        <begin position="756"/>
        <end position="778"/>
    </location>
</feature>
<feature type="helix" evidence="11">
    <location>
        <begin position="782"/>
        <end position="790"/>
    </location>
</feature>
<feature type="helix" evidence="11">
    <location>
        <begin position="793"/>
        <end position="804"/>
    </location>
</feature>
<feature type="strand" evidence="11">
    <location>
        <begin position="820"/>
        <end position="824"/>
    </location>
</feature>
<feature type="helix" evidence="11">
    <location>
        <begin position="859"/>
        <end position="882"/>
    </location>
</feature>
<feature type="helix" evidence="11">
    <location>
        <begin position="888"/>
        <end position="891"/>
    </location>
</feature>
<feature type="helix" evidence="11">
    <location>
        <begin position="900"/>
        <end position="903"/>
    </location>
</feature>
<feature type="strand" evidence="11">
    <location>
        <begin position="914"/>
        <end position="922"/>
    </location>
</feature>
<feature type="strand" evidence="11">
    <location>
        <begin position="926"/>
        <end position="935"/>
    </location>
</feature>
<feature type="helix" evidence="11">
    <location>
        <begin position="938"/>
        <end position="951"/>
    </location>
</feature>